<gene>
    <name evidence="1" type="primary">psbI</name>
</gene>
<feature type="chain" id="PRO_0000353238" description="Photosystem II reaction center protein I">
    <location>
        <begin position="1"/>
        <end position="36"/>
    </location>
</feature>
<feature type="transmembrane region" description="Helical" evidence="1">
    <location>
        <begin position="4"/>
        <end position="24"/>
    </location>
</feature>
<keyword id="KW-0150">Chloroplast</keyword>
<keyword id="KW-0472">Membrane</keyword>
<keyword id="KW-0602">Photosynthesis</keyword>
<keyword id="KW-0604">Photosystem II</keyword>
<keyword id="KW-0934">Plastid</keyword>
<keyword id="KW-0674">Reaction center</keyword>
<keyword id="KW-0793">Thylakoid</keyword>
<keyword id="KW-0812">Transmembrane</keyword>
<keyword id="KW-1133">Transmembrane helix</keyword>
<name>PSBI_MANES</name>
<organism>
    <name type="scientific">Manihot esculenta</name>
    <name type="common">Cassava</name>
    <name type="synonym">Jatropha manihot</name>
    <dbReference type="NCBI Taxonomy" id="3983"/>
    <lineage>
        <taxon>Eukaryota</taxon>
        <taxon>Viridiplantae</taxon>
        <taxon>Streptophyta</taxon>
        <taxon>Embryophyta</taxon>
        <taxon>Tracheophyta</taxon>
        <taxon>Spermatophyta</taxon>
        <taxon>Magnoliopsida</taxon>
        <taxon>eudicotyledons</taxon>
        <taxon>Gunneridae</taxon>
        <taxon>Pentapetalae</taxon>
        <taxon>rosids</taxon>
        <taxon>fabids</taxon>
        <taxon>Malpighiales</taxon>
        <taxon>Euphorbiaceae</taxon>
        <taxon>Crotonoideae</taxon>
        <taxon>Manihoteae</taxon>
        <taxon>Manihot</taxon>
    </lineage>
</organism>
<evidence type="ECO:0000255" key="1">
    <source>
        <dbReference type="HAMAP-Rule" id="MF_01316"/>
    </source>
</evidence>
<sequence length="36" mass="4168">MLTLKLFVYTVVIFFVSLFIFGFLSNDPGRNPGREE</sequence>
<geneLocation type="chloroplast"/>
<reference key="1">
    <citation type="journal article" date="2008" name="Theor. Appl. Genet.">
        <title>The complete nucleotide sequence of the cassava (Manihot esculenta) chloroplast genome and the evolution of atpF in Malpighiales: RNA editing and multiple losses of a group II intron.</title>
        <authorList>
            <person name="Daniell H."/>
            <person name="Wurdack K.J."/>
            <person name="Kanagaraj A."/>
            <person name="Lee S.-B."/>
            <person name="Saski C."/>
            <person name="Jansen R.K."/>
        </authorList>
    </citation>
    <scope>NUCLEOTIDE SEQUENCE [LARGE SCALE GENOMIC DNA]</scope>
    <source>
        <strain>cv. TME3</strain>
    </source>
</reference>
<comment type="function">
    <text evidence="1">One of the components of the core complex of photosystem II (PSII), required for its stability and/or assembly. PSII is a light-driven water:plastoquinone oxidoreductase that uses light energy to abstract electrons from H(2)O, generating O(2) and a proton gradient subsequently used for ATP formation. It consists of a core antenna complex that captures photons, and an electron transfer chain that converts photonic excitation into a charge separation.</text>
</comment>
<comment type="subunit">
    <text evidence="1">PSII is composed of 1 copy each of membrane proteins PsbA, PsbB, PsbC, PsbD, PsbE, PsbF, PsbH, PsbI, PsbJ, PsbK, PsbL, PsbM, PsbT, PsbX, PsbY, PsbZ, Psb30/Ycf12, at least 3 peripheral proteins of the oxygen-evolving complex and a large number of cofactors. It forms dimeric complexes.</text>
</comment>
<comment type="subcellular location">
    <subcellularLocation>
        <location evidence="1">Plastid</location>
        <location evidence="1">Chloroplast thylakoid membrane</location>
        <topology evidence="1">Single-pass membrane protein</topology>
    </subcellularLocation>
</comment>
<comment type="similarity">
    <text evidence="1">Belongs to the PsbI family.</text>
</comment>
<accession>B1NWD4</accession>
<dbReference type="EMBL" id="EU117376">
    <property type="protein sequence ID" value="ABV66138.1"/>
    <property type="molecule type" value="Genomic_DNA"/>
</dbReference>
<dbReference type="RefSeq" id="YP_001718421.1">
    <property type="nucleotide sequence ID" value="NC_010433.1"/>
</dbReference>
<dbReference type="SMR" id="B1NWD4"/>
<dbReference type="GeneID" id="5999990"/>
<dbReference type="KEGG" id="mesc:5999990"/>
<dbReference type="OrthoDB" id="564007at2759"/>
<dbReference type="GO" id="GO:0009535">
    <property type="term" value="C:chloroplast thylakoid membrane"/>
    <property type="evidence" value="ECO:0007669"/>
    <property type="project" value="UniProtKB-SubCell"/>
</dbReference>
<dbReference type="GO" id="GO:0009539">
    <property type="term" value="C:photosystem II reaction center"/>
    <property type="evidence" value="ECO:0007669"/>
    <property type="project" value="InterPro"/>
</dbReference>
<dbReference type="GO" id="GO:0015979">
    <property type="term" value="P:photosynthesis"/>
    <property type="evidence" value="ECO:0007669"/>
    <property type="project" value="UniProtKB-UniRule"/>
</dbReference>
<dbReference type="HAMAP" id="MF_01316">
    <property type="entry name" value="PSII_PsbI"/>
    <property type="match status" value="1"/>
</dbReference>
<dbReference type="InterPro" id="IPR003686">
    <property type="entry name" value="PSII_PsbI"/>
</dbReference>
<dbReference type="InterPro" id="IPR037271">
    <property type="entry name" value="PSII_PsbI_sf"/>
</dbReference>
<dbReference type="NCBIfam" id="NF002735">
    <property type="entry name" value="PRK02655.1"/>
    <property type="match status" value="1"/>
</dbReference>
<dbReference type="PANTHER" id="PTHR35772">
    <property type="entry name" value="PHOTOSYSTEM II REACTION CENTER PROTEIN I"/>
    <property type="match status" value="1"/>
</dbReference>
<dbReference type="PANTHER" id="PTHR35772:SF1">
    <property type="entry name" value="PHOTOSYSTEM II REACTION CENTER PROTEIN I"/>
    <property type="match status" value="1"/>
</dbReference>
<dbReference type="Pfam" id="PF02532">
    <property type="entry name" value="PsbI"/>
    <property type="match status" value="1"/>
</dbReference>
<dbReference type="SUPFAM" id="SSF161041">
    <property type="entry name" value="Photosystem II reaction center protein I, PsbI"/>
    <property type="match status" value="1"/>
</dbReference>
<protein>
    <recommendedName>
        <fullName evidence="1">Photosystem II reaction center protein I</fullName>
        <shortName evidence="1">PSII-I</shortName>
    </recommendedName>
    <alternativeName>
        <fullName evidence="1">PSII 4.8 kDa protein</fullName>
    </alternativeName>
</protein>
<proteinExistence type="inferred from homology"/>